<proteinExistence type="inferred from homology"/>
<name>RL9_SHEB8</name>
<accession>A6WJ82</accession>
<dbReference type="EMBL" id="CP000753">
    <property type="protein sequence ID" value="ABS06871.1"/>
    <property type="molecule type" value="Genomic_DNA"/>
</dbReference>
<dbReference type="RefSeq" id="WP_006086059.1">
    <property type="nucleotide sequence ID" value="NC_009665.1"/>
</dbReference>
<dbReference type="SMR" id="A6WJ82"/>
<dbReference type="GeneID" id="11771054"/>
<dbReference type="KEGG" id="sbm:Shew185_0714"/>
<dbReference type="HOGENOM" id="CLU_078938_4_1_6"/>
<dbReference type="GO" id="GO:1990904">
    <property type="term" value="C:ribonucleoprotein complex"/>
    <property type="evidence" value="ECO:0007669"/>
    <property type="project" value="UniProtKB-KW"/>
</dbReference>
<dbReference type="GO" id="GO:0005840">
    <property type="term" value="C:ribosome"/>
    <property type="evidence" value="ECO:0007669"/>
    <property type="project" value="UniProtKB-KW"/>
</dbReference>
<dbReference type="GO" id="GO:0019843">
    <property type="term" value="F:rRNA binding"/>
    <property type="evidence" value="ECO:0007669"/>
    <property type="project" value="UniProtKB-UniRule"/>
</dbReference>
<dbReference type="GO" id="GO:0003735">
    <property type="term" value="F:structural constituent of ribosome"/>
    <property type="evidence" value="ECO:0007669"/>
    <property type="project" value="InterPro"/>
</dbReference>
<dbReference type="GO" id="GO:0006412">
    <property type="term" value="P:translation"/>
    <property type="evidence" value="ECO:0007669"/>
    <property type="project" value="UniProtKB-UniRule"/>
</dbReference>
<dbReference type="FunFam" id="3.10.430.100:FF:000001">
    <property type="entry name" value="50S ribosomal protein L9"/>
    <property type="match status" value="1"/>
</dbReference>
<dbReference type="FunFam" id="3.40.5.10:FF:000001">
    <property type="entry name" value="50S ribosomal protein L9"/>
    <property type="match status" value="1"/>
</dbReference>
<dbReference type="Gene3D" id="3.10.430.100">
    <property type="entry name" value="Ribosomal protein L9, C-terminal domain"/>
    <property type="match status" value="1"/>
</dbReference>
<dbReference type="Gene3D" id="3.40.5.10">
    <property type="entry name" value="Ribosomal protein L9, N-terminal domain"/>
    <property type="match status" value="1"/>
</dbReference>
<dbReference type="HAMAP" id="MF_00503">
    <property type="entry name" value="Ribosomal_bL9"/>
    <property type="match status" value="1"/>
</dbReference>
<dbReference type="InterPro" id="IPR000244">
    <property type="entry name" value="Ribosomal_bL9"/>
</dbReference>
<dbReference type="InterPro" id="IPR009027">
    <property type="entry name" value="Ribosomal_bL9/RNase_H1_N"/>
</dbReference>
<dbReference type="InterPro" id="IPR020594">
    <property type="entry name" value="Ribosomal_bL9_bac/chp"/>
</dbReference>
<dbReference type="InterPro" id="IPR020069">
    <property type="entry name" value="Ribosomal_bL9_C"/>
</dbReference>
<dbReference type="InterPro" id="IPR036791">
    <property type="entry name" value="Ribosomal_bL9_C_sf"/>
</dbReference>
<dbReference type="InterPro" id="IPR020070">
    <property type="entry name" value="Ribosomal_bL9_N"/>
</dbReference>
<dbReference type="InterPro" id="IPR036935">
    <property type="entry name" value="Ribosomal_bL9_N_sf"/>
</dbReference>
<dbReference type="NCBIfam" id="TIGR00158">
    <property type="entry name" value="L9"/>
    <property type="match status" value="1"/>
</dbReference>
<dbReference type="PANTHER" id="PTHR21368">
    <property type="entry name" value="50S RIBOSOMAL PROTEIN L9"/>
    <property type="match status" value="1"/>
</dbReference>
<dbReference type="Pfam" id="PF03948">
    <property type="entry name" value="Ribosomal_L9_C"/>
    <property type="match status" value="1"/>
</dbReference>
<dbReference type="Pfam" id="PF01281">
    <property type="entry name" value="Ribosomal_L9_N"/>
    <property type="match status" value="1"/>
</dbReference>
<dbReference type="SUPFAM" id="SSF55658">
    <property type="entry name" value="L9 N-domain-like"/>
    <property type="match status" value="1"/>
</dbReference>
<dbReference type="SUPFAM" id="SSF55653">
    <property type="entry name" value="Ribosomal protein L9 C-domain"/>
    <property type="match status" value="1"/>
</dbReference>
<dbReference type="PROSITE" id="PS00651">
    <property type="entry name" value="RIBOSOMAL_L9"/>
    <property type="match status" value="1"/>
</dbReference>
<reference key="1">
    <citation type="submission" date="2007-07" db="EMBL/GenBank/DDBJ databases">
        <title>Complete sequence of chromosome of Shewanella baltica OS185.</title>
        <authorList>
            <consortium name="US DOE Joint Genome Institute"/>
            <person name="Copeland A."/>
            <person name="Lucas S."/>
            <person name="Lapidus A."/>
            <person name="Barry K."/>
            <person name="Glavina del Rio T."/>
            <person name="Dalin E."/>
            <person name="Tice H."/>
            <person name="Pitluck S."/>
            <person name="Sims D."/>
            <person name="Brettin T."/>
            <person name="Bruce D."/>
            <person name="Detter J.C."/>
            <person name="Han C."/>
            <person name="Schmutz J."/>
            <person name="Larimer F."/>
            <person name="Land M."/>
            <person name="Hauser L."/>
            <person name="Kyrpides N."/>
            <person name="Mikhailova N."/>
            <person name="Brettar I."/>
            <person name="Rodrigues J."/>
            <person name="Konstantinidis K."/>
            <person name="Tiedje J."/>
            <person name="Richardson P."/>
        </authorList>
    </citation>
    <scope>NUCLEOTIDE SEQUENCE [LARGE SCALE GENOMIC DNA]</scope>
    <source>
        <strain>OS185</strain>
    </source>
</reference>
<organism>
    <name type="scientific">Shewanella baltica (strain OS185)</name>
    <dbReference type="NCBI Taxonomy" id="402882"/>
    <lineage>
        <taxon>Bacteria</taxon>
        <taxon>Pseudomonadati</taxon>
        <taxon>Pseudomonadota</taxon>
        <taxon>Gammaproteobacteria</taxon>
        <taxon>Alteromonadales</taxon>
        <taxon>Shewanellaceae</taxon>
        <taxon>Shewanella</taxon>
    </lineage>
</organism>
<protein>
    <recommendedName>
        <fullName evidence="1">Large ribosomal subunit protein bL9</fullName>
    </recommendedName>
    <alternativeName>
        <fullName evidence="2">50S ribosomal protein L9</fullName>
    </alternativeName>
</protein>
<comment type="function">
    <text evidence="1">Binds to the 23S rRNA.</text>
</comment>
<comment type="similarity">
    <text evidence="1">Belongs to the bacterial ribosomal protein bL9 family.</text>
</comment>
<keyword id="KW-0687">Ribonucleoprotein</keyword>
<keyword id="KW-0689">Ribosomal protein</keyword>
<keyword id="KW-0694">RNA-binding</keyword>
<keyword id="KW-0699">rRNA-binding</keyword>
<evidence type="ECO:0000255" key="1">
    <source>
        <dbReference type="HAMAP-Rule" id="MF_00503"/>
    </source>
</evidence>
<evidence type="ECO:0000305" key="2"/>
<feature type="chain" id="PRO_1000014856" description="Large ribosomal subunit protein bL9">
    <location>
        <begin position="1"/>
        <end position="150"/>
    </location>
</feature>
<gene>
    <name evidence="1" type="primary">rplI</name>
    <name type="ordered locus">Shew185_0714</name>
</gene>
<sequence>MNVILLDKIANLGNLGDQVSVKAGYARNFLLPQGKAVVANESNVKVFEARRAELEAKLAAELAAANLRAEKITALEAVVIASKAGDEGKLFGSVGNRDIADAVTAAGVELAKSEVRLPLGALRTTGDFEVEVQLHTEVKAVVKVSVVAEA</sequence>